<sequence length="479" mass="54234">MSIVVKNNIHWVGQRDWEVRDFHGTEYKTLRGSSYNSYLIREEKNVLIDTVDHKFSREFVQNLRNEIDLADIDYIVINHAEEDHAGALTELMAQIPDTPIYCTANAIDSINGHHHHPEWNFNVVKTGDTLDIGNGKQLIFVETPMLHWPDSMMTYLTGDAVLFSNDAFGQHYCDEHLFNDEVDQTELFEQCQRYYANILTPFSRLVTPKITEILGFNLPVDMIATSHGVVWRDNPTQIVELYLKWAADYQEDRITIFYDTMSNNTRMMADAIAQGIAETDPRVAVKIFNVARSDKNEILTNVFRSKGVLVGTSTMNNVMMPKIAGLVEEMTGLRFRNKRASAFGSHGWSGGAVDRLSTRLQDAGFEMSLSLKAKWRPDQDALKLCREHGREIARQWALAPLPQSTVNTVVKEETSATTTADLGPRMQCSVCQWIYDPAKGEPMQDVAPGTPWSEVPDNFLCPECSLGKDVFEELASEAK</sequence>
<keyword id="KW-0963">Cytoplasm</keyword>
<keyword id="KW-0249">Electron transport</keyword>
<keyword id="KW-0285">Flavoprotein</keyword>
<keyword id="KW-0288">FMN</keyword>
<keyword id="KW-0408">Iron</keyword>
<keyword id="KW-0479">Metal-binding</keyword>
<keyword id="KW-0560">Oxidoreductase</keyword>
<keyword id="KW-0813">Transport</keyword>
<reference key="1">
    <citation type="journal article" date="2008" name="J. Bacteriol.">
        <title>The complete genome sequence of Escherichia coli DH10B: insights into the biology of a laboratory workhorse.</title>
        <authorList>
            <person name="Durfee T."/>
            <person name="Nelson R."/>
            <person name="Baldwin S."/>
            <person name="Plunkett G. III"/>
            <person name="Burland V."/>
            <person name="Mau B."/>
            <person name="Petrosino J.F."/>
            <person name="Qin X."/>
            <person name="Muzny D.M."/>
            <person name="Ayele M."/>
            <person name="Gibbs R.A."/>
            <person name="Csorgo B."/>
            <person name="Posfai G."/>
            <person name="Weinstock G.M."/>
            <person name="Blattner F.R."/>
        </authorList>
    </citation>
    <scope>NUCLEOTIDE SEQUENCE [LARGE SCALE GENOMIC DNA]</scope>
    <source>
        <strain>K12 / DH10B</strain>
    </source>
</reference>
<reference key="2">
    <citation type="journal article" date="2002" name="J. Bacteriol.">
        <title>The NorR protein of Escherichia coli activates expression of the flavorubredoxin gene norV in response to reactive nitrogen species.</title>
        <authorList>
            <person name="Hutchings M.I."/>
            <person name="Mandhana N."/>
            <person name="Spiro S."/>
        </authorList>
    </citation>
    <scope>FUNCTION</scope>
</reference>
<feature type="chain" id="PRO_0000341308" description="Anaerobic nitric oxide reductase flavorubredoxin">
    <location>
        <begin position="1"/>
        <end position="479"/>
    </location>
</feature>
<feature type="domain" description="Flavodoxin-like">
    <location>
        <begin position="254"/>
        <end position="393"/>
    </location>
</feature>
<feature type="domain" description="Rubredoxin-like">
    <location>
        <begin position="423"/>
        <end position="479"/>
    </location>
</feature>
<feature type="region of interest" description="Zinc metallo-hydrolase">
    <location>
        <begin position="30"/>
        <end position="210"/>
    </location>
</feature>
<feature type="binding site" evidence="1">
    <location>
        <position position="79"/>
    </location>
    <ligand>
        <name>Fe cation</name>
        <dbReference type="ChEBI" id="CHEBI:24875"/>
        <label>1</label>
    </ligand>
</feature>
<feature type="binding site" evidence="1">
    <location>
        <position position="81"/>
    </location>
    <ligand>
        <name>Fe cation</name>
        <dbReference type="ChEBI" id="CHEBI:24875"/>
        <label>1</label>
    </ligand>
</feature>
<feature type="binding site" evidence="1">
    <location>
        <position position="83"/>
    </location>
    <ligand>
        <name>Fe cation</name>
        <dbReference type="ChEBI" id="CHEBI:24875"/>
        <label>2</label>
    </ligand>
</feature>
<feature type="binding site" evidence="1">
    <location>
        <position position="147"/>
    </location>
    <ligand>
        <name>Fe cation</name>
        <dbReference type="ChEBI" id="CHEBI:24875"/>
        <label>1</label>
    </ligand>
</feature>
<feature type="binding site" evidence="1">
    <location>
        <position position="166"/>
    </location>
    <ligand>
        <name>Fe cation</name>
        <dbReference type="ChEBI" id="CHEBI:24875"/>
        <label>1</label>
    </ligand>
</feature>
<feature type="binding site" evidence="1">
    <location>
        <position position="166"/>
    </location>
    <ligand>
        <name>Fe cation</name>
        <dbReference type="ChEBI" id="CHEBI:24875"/>
        <label>2</label>
    </ligand>
</feature>
<feature type="binding site" evidence="1">
    <location>
        <position position="227"/>
    </location>
    <ligand>
        <name>Fe cation</name>
        <dbReference type="ChEBI" id="CHEBI:24875"/>
        <label>2</label>
    </ligand>
</feature>
<feature type="binding site" evidence="1">
    <location>
        <begin position="260"/>
        <end position="264"/>
    </location>
    <ligand>
        <name>FMN</name>
        <dbReference type="ChEBI" id="CHEBI:58210"/>
    </ligand>
</feature>
<feature type="binding site" evidence="1">
    <location>
        <begin position="342"/>
        <end position="369"/>
    </location>
    <ligand>
        <name>FMN</name>
        <dbReference type="ChEBI" id="CHEBI:58210"/>
    </ligand>
</feature>
<feature type="binding site" evidence="1">
    <location>
        <position position="428"/>
    </location>
    <ligand>
        <name>Fe cation</name>
        <dbReference type="ChEBI" id="CHEBI:24875"/>
        <label>3</label>
    </ligand>
</feature>
<feature type="binding site" evidence="1">
    <location>
        <position position="431"/>
    </location>
    <ligand>
        <name>Fe cation</name>
        <dbReference type="ChEBI" id="CHEBI:24875"/>
        <label>3</label>
    </ligand>
</feature>
<feature type="binding site" evidence="1">
    <location>
        <position position="461"/>
    </location>
    <ligand>
        <name>Fe cation</name>
        <dbReference type="ChEBI" id="CHEBI:24875"/>
        <label>3</label>
    </ligand>
</feature>
<feature type="binding site" evidence="1">
    <location>
        <position position="464"/>
    </location>
    <ligand>
        <name>Fe cation</name>
        <dbReference type="ChEBI" id="CHEBI:24875"/>
        <label>3</label>
    </ligand>
</feature>
<proteinExistence type="inferred from homology"/>
<evidence type="ECO:0000250" key="1"/>
<evidence type="ECO:0000269" key="2">
    <source>
    </source>
</evidence>
<evidence type="ECO:0000305" key="3"/>
<dbReference type="EMBL" id="CP000948">
    <property type="protein sequence ID" value="ACB03828.1"/>
    <property type="molecule type" value="Genomic_DNA"/>
</dbReference>
<dbReference type="RefSeq" id="WP_000029634.1">
    <property type="nucleotide sequence ID" value="NC_010473.1"/>
</dbReference>
<dbReference type="SMR" id="B1XCN7"/>
<dbReference type="KEGG" id="ecd:ECDH10B_2878"/>
<dbReference type="HOGENOM" id="CLU_017490_0_1_6"/>
<dbReference type="UniPathway" id="UPA00638"/>
<dbReference type="GO" id="GO:0005737">
    <property type="term" value="C:cytoplasm"/>
    <property type="evidence" value="ECO:0007669"/>
    <property type="project" value="UniProtKB-SubCell"/>
</dbReference>
<dbReference type="GO" id="GO:0009055">
    <property type="term" value="F:electron transfer activity"/>
    <property type="evidence" value="ECO:0007669"/>
    <property type="project" value="UniProtKB-UniRule"/>
</dbReference>
<dbReference type="GO" id="GO:0010181">
    <property type="term" value="F:FMN binding"/>
    <property type="evidence" value="ECO:0007669"/>
    <property type="project" value="InterPro"/>
</dbReference>
<dbReference type="GO" id="GO:0005506">
    <property type="term" value="F:iron ion binding"/>
    <property type="evidence" value="ECO:0007669"/>
    <property type="project" value="InterPro"/>
</dbReference>
<dbReference type="GO" id="GO:0016966">
    <property type="term" value="F:nitric oxide reductase activity"/>
    <property type="evidence" value="ECO:0007669"/>
    <property type="project" value="InterPro"/>
</dbReference>
<dbReference type="CDD" id="cd07709">
    <property type="entry name" value="flavodiiron_proteins_MBL-fold"/>
    <property type="match status" value="1"/>
</dbReference>
<dbReference type="CDD" id="cd00730">
    <property type="entry name" value="rubredoxin"/>
    <property type="match status" value="1"/>
</dbReference>
<dbReference type="FunFam" id="2.20.28.10:FF:000010">
    <property type="entry name" value="Anaerobic nitric oxide reductase flavorubredoxin"/>
    <property type="match status" value="1"/>
</dbReference>
<dbReference type="FunFam" id="3.40.50.360:FF:000012">
    <property type="entry name" value="Anaerobic nitric oxide reductase flavorubredoxin"/>
    <property type="match status" value="1"/>
</dbReference>
<dbReference type="FunFam" id="3.60.15.10:FF:000009">
    <property type="entry name" value="Anaerobic nitric oxide reductase flavorubredoxin"/>
    <property type="match status" value="1"/>
</dbReference>
<dbReference type="Gene3D" id="2.20.28.10">
    <property type="match status" value="1"/>
</dbReference>
<dbReference type="Gene3D" id="3.40.50.360">
    <property type="match status" value="1"/>
</dbReference>
<dbReference type="Gene3D" id="3.60.15.10">
    <property type="entry name" value="Ribonuclease Z/Hydroxyacylglutathione hydrolase-like"/>
    <property type="match status" value="1"/>
</dbReference>
<dbReference type="HAMAP" id="MF_01312">
    <property type="entry name" value="NorV"/>
    <property type="match status" value="1"/>
</dbReference>
<dbReference type="InterPro" id="IPR023957">
    <property type="entry name" value="Anaer_NO_rdtase_flvorubredoxin"/>
</dbReference>
<dbReference type="InterPro" id="IPR008254">
    <property type="entry name" value="Flavodoxin/NO_synth"/>
</dbReference>
<dbReference type="InterPro" id="IPR029039">
    <property type="entry name" value="Flavoprotein-like_sf"/>
</dbReference>
<dbReference type="InterPro" id="IPR001279">
    <property type="entry name" value="Metallo-B-lactamas"/>
</dbReference>
<dbReference type="InterPro" id="IPR045761">
    <property type="entry name" value="ODP_dom"/>
</dbReference>
<dbReference type="InterPro" id="IPR036866">
    <property type="entry name" value="RibonucZ/Hydroxyglut_hydro"/>
</dbReference>
<dbReference type="InterPro" id="IPR024934">
    <property type="entry name" value="Rubredoxin-like_dom"/>
</dbReference>
<dbReference type="InterPro" id="IPR016440">
    <property type="entry name" value="Rubredoxin-O_OxRdtase"/>
</dbReference>
<dbReference type="InterPro" id="IPR024935">
    <property type="entry name" value="Rubredoxin_dom"/>
</dbReference>
<dbReference type="NCBIfam" id="NF003954">
    <property type="entry name" value="PRK05452.1"/>
    <property type="match status" value="1"/>
</dbReference>
<dbReference type="PANTHER" id="PTHR43717">
    <property type="entry name" value="ANAEROBIC NITRIC OXIDE REDUCTASE FLAVORUBREDOXIN"/>
    <property type="match status" value="1"/>
</dbReference>
<dbReference type="PANTHER" id="PTHR43717:SF1">
    <property type="entry name" value="ANAEROBIC NITRIC OXIDE REDUCTASE FLAVORUBREDOXIN"/>
    <property type="match status" value="1"/>
</dbReference>
<dbReference type="Pfam" id="PF00258">
    <property type="entry name" value="Flavodoxin_1"/>
    <property type="match status" value="1"/>
</dbReference>
<dbReference type="Pfam" id="PF19583">
    <property type="entry name" value="ODP"/>
    <property type="match status" value="1"/>
</dbReference>
<dbReference type="Pfam" id="PF00301">
    <property type="entry name" value="Rubredoxin"/>
    <property type="match status" value="1"/>
</dbReference>
<dbReference type="PIRSF" id="PIRSF005243">
    <property type="entry name" value="ROO"/>
    <property type="match status" value="1"/>
</dbReference>
<dbReference type="PRINTS" id="PR00163">
    <property type="entry name" value="RUBREDOXIN"/>
</dbReference>
<dbReference type="SMART" id="SM00849">
    <property type="entry name" value="Lactamase_B"/>
    <property type="match status" value="1"/>
</dbReference>
<dbReference type="SUPFAM" id="SSF52218">
    <property type="entry name" value="Flavoproteins"/>
    <property type="match status" value="1"/>
</dbReference>
<dbReference type="SUPFAM" id="SSF56281">
    <property type="entry name" value="Metallo-hydrolase/oxidoreductase"/>
    <property type="match status" value="1"/>
</dbReference>
<dbReference type="SUPFAM" id="SSF57802">
    <property type="entry name" value="Rubredoxin-like"/>
    <property type="match status" value="1"/>
</dbReference>
<dbReference type="PROSITE" id="PS50902">
    <property type="entry name" value="FLAVODOXIN_LIKE"/>
    <property type="match status" value="1"/>
</dbReference>
<dbReference type="PROSITE" id="PS50903">
    <property type="entry name" value="RUBREDOXIN_LIKE"/>
    <property type="match status" value="1"/>
</dbReference>
<accession>B1XCN7</accession>
<protein>
    <recommendedName>
        <fullName>Anaerobic nitric oxide reductase flavorubredoxin</fullName>
        <shortName>FlRd</shortName>
        <shortName>FlavoRb</shortName>
    </recommendedName>
</protein>
<organism>
    <name type="scientific">Escherichia coli (strain K12 / DH10B)</name>
    <dbReference type="NCBI Taxonomy" id="316385"/>
    <lineage>
        <taxon>Bacteria</taxon>
        <taxon>Pseudomonadati</taxon>
        <taxon>Pseudomonadota</taxon>
        <taxon>Gammaproteobacteria</taxon>
        <taxon>Enterobacterales</taxon>
        <taxon>Enterobacteriaceae</taxon>
        <taxon>Escherichia</taxon>
    </lineage>
</organism>
<name>NORV_ECODH</name>
<comment type="function">
    <text evidence="1 2">Anaerobic nitric oxide reductase; uses NADH to detoxify nitric oxide (NO), protecting several 4Fe-4S NO-sensitive enzymes. Has at least 2 reductase partners, only one of which (NorW, flavorubredoxin reductase) has been identified. NO probably binds to the di-iron center; electrons enter from the reductase at rubredoxin and are transferred sequentially to the FMN center and the di-iron center. Also able to function as an aerobic oxygen reductase (By similarity).</text>
</comment>
<comment type="cofactor">
    <cofactor evidence="1">
        <name>Fe cation</name>
        <dbReference type="ChEBI" id="CHEBI:24875"/>
    </cofactor>
    <text evidence="1">Binds 3 Fe cations per monomer.</text>
</comment>
<comment type="cofactor">
    <cofactor evidence="1">
        <name>FMN</name>
        <dbReference type="ChEBI" id="CHEBI:58210"/>
    </cofactor>
    <text evidence="1">Binds 1 FMN per monomer.</text>
</comment>
<comment type="pathway">
    <text>Nitrogen metabolism; nitric oxide reduction.</text>
</comment>
<comment type="subunit">
    <text evidence="1">Homotetramer.</text>
</comment>
<comment type="subcellular location">
    <subcellularLocation>
        <location evidence="1">Cytoplasm</location>
    </subcellularLocation>
</comment>
<comment type="induction">
    <text evidence="1">Transcription is negatively regulated by FNR and does not require NarL or NarP (By similarity). Anaerobically activated by nitroprusside in both rich and minimal media. In anaerobic minimal medium, activated by nitrate. In rich medium aerobic cultures activated by nitroprusside. NorR required for activation.</text>
</comment>
<comment type="similarity">
    <text evidence="3">In the N-terminal section; belongs to the zinc metallo-hydrolase group 3 family.</text>
</comment>
<gene>
    <name type="primary">norV</name>
    <name type="synonym">flrD</name>
    <name type="ordered locus">ECDH10B_2878</name>
</gene>